<protein>
    <recommendedName>
        <fullName evidence="1">Eukaryotic translation initiation factor 3 subunit G</fullName>
        <shortName evidence="1">eIF3g</shortName>
    </recommendedName>
    <alternativeName>
        <fullName evidence="1">Eukaryotic translation initiation factor 3 RNA-binding subunit</fullName>
        <shortName evidence="1">eIF-3 RNA-binding subunit</shortName>
    </alternativeName>
    <alternativeName>
        <fullName evidence="1">Translation initiation factor eIF3 p33 subunit homolog</fullName>
        <shortName evidence="1">eIF3 p33 homolog</shortName>
    </alternativeName>
</protein>
<keyword id="KW-0963">Cytoplasm</keyword>
<keyword id="KW-0396">Initiation factor</keyword>
<keyword id="KW-0597">Phosphoprotein</keyword>
<keyword id="KW-0648">Protein biosynthesis</keyword>
<keyword id="KW-1185">Reference proteome</keyword>
<keyword id="KW-0694">RNA-binding</keyword>
<organism>
    <name type="scientific">Kluyveromyces lactis (strain ATCC 8585 / CBS 2359 / DSM 70799 / NBRC 1267 / NRRL Y-1140 / WM37)</name>
    <name type="common">Yeast</name>
    <name type="synonym">Candida sphaerica</name>
    <dbReference type="NCBI Taxonomy" id="284590"/>
    <lineage>
        <taxon>Eukaryota</taxon>
        <taxon>Fungi</taxon>
        <taxon>Dikarya</taxon>
        <taxon>Ascomycota</taxon>
        <taxon>Saccharomycotina</taxon>
        <taxon>Saccharomycetes</taxon>
        <taxon>Saccharomycetales</taxon>
        <taxon>Saccharomycetaceae</taxon>
        <taxon>Kluyveromyces</taxon>
    </lineage>
</organism>
<evidence type="ECO:0000255" key="1">
    <source>
        <dbReference type="HAMAP-Rule" id="MF_03006"/>
    </source>
</evidence>
<evidence type="ECO:0000256" key="2">
    <source>
        <dbReference type="SAM" id="MobiDB-lite"/>
    </source>
</evidence>
<sequence>MSAIPEPRIIENDDGSKTVISFKIQDGKKYKVTQKVKEITVTEKVNKNIALRRNWKKYGADKGAAPGPDISTTQLGEELELDLSPNWKEMEEEKAKEKAANSTQKVITCRICGGAHFTMHCPYKDTLGKKPTTSAGLDPAIGGGDMSAQGGSGSGRYVPPSLRAGARDPSSNAYQDQRERDDAKTIRLTQVNELADEEVLKRELLFPFGEIPRVFVVKNPETGRSRGVAYVTFQTEEIAAQALKLLEGRGFMNFMLHAEWSKPKPKKEE</sequence>
<dbReference type="EMBL" id="CR382122">
    <property type="protein sequence ID" value="CAH01961.1"/>
    <property type="molecule type" value="Genomic_DNA"/>
</dbReference>
<dbReference type="RefSeq" id="XP_451568.1">
    <property type="nucleotide sequence ID" value="XM_451568.1"/>
</dbReference>
<dbReference type="SMR" id="Q6CWX1"/>
<dbReference type="FunCoup" id="Q6CWX1">
    <property type="interactions" value="1165"/>
</dbReference>
<dbReference type="STRING" id="284590.Q6CWX1"/>
<dbReference type="PaxDb" id="284590-Q6CWX1"/>
<dbReference type="KEGG" id="kla:KLLA0_B00847g"/>
<dbReference type="eggNOG" id="KOG0122">
    <property type="taxonomic scope" value="Eukaryota"/>
</dbReference>
<dbReference type="HOGENOM" id="CLU_034595_0_0_1"/>
<dbReference type="InParanoid" id="Q6CWX1"/>
<dbReference type="OMA" id="ICQGDHF"/>
<dbReference type="Proteomes" id="UP000000598">
    <property type="component" value="Chromosome B"/>
</dbReference>
<dbReference type="GO" id="GO:0016282">
    <property type="term" value="C:eukaryotic 43S preinitiation complex"/>
    <property type="evidence" value="ECO:0007669"/>
    <property type="project" value="UniProtKB-UniRule"/>
</dbReference>
<dbReference type="GO" id="GO:0033290">
    <property type="term" value="C:eukaryotic 48S preinitiation complex"/>
    <property type="evidence" value="ECO:0007669"/>
    <property type="project" value="UniProtKB-UniRule"/>
</dbReference>
<dbReference type="GO" id="GO:0005852">
    <property type="term" value="C:eukaryotic translation initiation factor 3 complex"/>
    <property type="evidence" value="ECO:0007669"/>
    <property type="project" value="UniProtKB-UniRule"/>
</dbReference>
<dbReference type="GO" id="GO:0003723">
    <property type="term" value="F:RNA binding"/>
    <property type="evidence" value="ECO:0007669"/>
    <property type="project" value="UniProtKB-UniRule"/>
</dbReference>
<dbReference type="GO" id="GO:0003743">
    <property type="term" value="F:translation initiation factor activity"/>
    <property type="evidence" value="ECO:0007669"/>
    <property type="project" value="UniProtKB-UniRule"/>
</dbReference>
<dbReference type="GO" id="GO:0001732">
    <property type="term" value="P:formation of cytoplasmic translation initiation complex"/>
    <property type="evidence" value="ECO:0007669"/>
    <property type="project" value="UniProtKB-UniRule"/>
</dbReference>
<dbReference type="CDD" id="cd12933">
    <property type="entry name" value="eIF3G"/>
    <property type="match status" value="1"/>
</dbReference>
<dbReference type="CDD" id="cd12408">
    <property type="entry name" value="RRM_eIF3G_like"/>
    <property type="match status" value="1"/>
</dbReference>
<dbReference type="Gene3D" id="3.30.70.330">
    <property type="match status" value="1"/>
</dbReference>
<dbReference type="HAMAP" id="MF_03006">
    <property type="entry name" value="eIF3g"/>
    <property type="match status" value="1"/>
</dbReference>
<dbReference type="InterPro" id="IPR017334">
    <property type="entry name" value="eIF3_g"/>
</dbReference>
<dbReference type="InterPro" id="IPR024675">
    <property type="entry name" value="eIF3g_N"/>
</dbReference>
<dbReference type="InterPro" id="IPR034240">
    <property type="entry name" value="eIF3G_RRM"/>
</dbReference>
<dbReference type="InterPro" id="IPR012677">
    <property type="entry name" value="Nucleotide-bd_a/b_plait_sf"/>
</dbReference>
<dbReference type="InterPro" id="IPR035979">
    <property type="entry name" value="RBD_domain_sf"/>
</dbReference>
<dbReference type="InterPro" id="IPR000504">
    <property type="entry name" value="RRM_dom"/>
</dbReference>
<dbReference type="PANTHER" id="PTHR10352">
    <property type="entry name" value="EUKARYOTIC TRANSLATION INITIATION FACTOR 3 SUBUNIT G"/>
    <property type="match status" value="1"/>
</dbReference>
<dbReference type="Pfam" id="PF12353">
    <property type="entry name" value="eIF3g"/>
    <property type="match status" value="1"/>
</dbReference>
<dbReference type="Pfam" id="PF00076">
    <property type="entry name" value="RRM_1"/>
    <property type="match status" value="1"/>
</dbReference>
<dbReference type="PIRSF" id="PIRSF037949">
    <property type="entry name" value="Transl_init_eIF-3_RNA-bind"/>
    <property type="match status" value="1"/>
</dbReference>
<dbReference type="SMART" id="SM00360">
    <property type="entry name" value="RRM"/>
    <property type="match status" value="1"/>
</dbReference>
<dbReference type="SUPFAM" id="SSF54928">
    <property type="entry name" value="RNA-binding domain, RBD"/>
    <property type="match status" value="1"/>
</dbReference>
<dbReference type="PROSITE" id="PS50102">
    <property type="entry name" value="RRM"/>
    <property type="match status" value="1"/>
</dbReference>
<name>EIF3G_KLULA</name>
<gene>
    <name evidence="1" type="primary">TIF35</name>
    <name type="ordered locus">KLLA0B00847g</name>
</gene>
<reference key="1">
    <citation type="journal article" date="2004" name="Nature">
        <title>Genome evolution in yeasts.</title>
        <authorList>
            <person name="Dujon B."/>
            <person name="Sherman D."/>
            <person name="Fischer G."/>
            <person name="Durrens P."/>
            <person name="Casaregola S."/>
            <person name="Lafontaine I."/>
            <person name="de Montigny J."/>
            <person name="Marck C."/>
            <person name="Neuveglise C."/>
            <person name="Talla E."/>
            <person name="Goffard N."/>
            <person name="Frangeul L."/>
            <person name="Aigle M."/>
            <person name="Anthouard V."/>
            <person name="Babour A."/>
            <person name="Barbe V."/>
            <person name="Barnay S."/>
            <person name="Blanchin S."/>
            <person name="Beckerich J.-M."/>
            <person name="Beyne E."/>
            <person name="Bleykasten C."/>
            <person name="Boisrame A."/>
            <person name="Boyer J."/>
            <person name="Cattolico L."/>
            <person name="Confanioleri F."/>
            <person name="de Daruvar A."/>
            <person name="Despons L."/>
            <person name="Fabre E."/>
            <person name="Fairhead C."/>
            <person name="Ferry-Dumazet H."/>
            <person name="Groppi A."/>
            <person name="Hantraye F."/>
            <person name="Hennequin C."/>
            <person name="Jauniaux N."/>
            <person name="Joyet P."/>
            <person name="Kachouri R."/>
            <person name="Kerrest A."/>
            <person name="Koszul R."/>
            <person name="Lemaire M."/>
            <person name="Lesur I."/>
            <person name="Ma L."/>
            <person name="Muller H."/>
            <person name="Nicaud J.-M."/>
            <person name="Nikolski M."/>
            <person name="Oztas S."/>
            <person name="Ozier-Kalogeropoulos O."/>
            <person name="Pellenz S."/>
            <person name="Potier S."/>
            <person name="Richard G.-F."/>
            <person name="Straub M.-L."/>
            <person name="Suleau A."/>
            <person name="Swennen D."/>
            <person name="Tekaia F."/>
            <person name="Wesolowski-Louvel M."/>
            <person name="Westhof E."/>
            <person name="Wirth B."/>
            <person name="Zeniou-Meyer M."/>
            <person name="Zivanovic Y."/>
            <person name="Bolotin-Fukuhara M."/>
            <person name="Thierry A."/>
            <person name="Bouchier C."/>
            <person name="Caudron B."/>
            <person name="Scarpelli C."/>
            <person name="Gaillardin C."/>
            <person name="Weissenbach J."/>
            <person name="Wincker P."/>
            <person name="Souciet J.-L."/>
        </authorList>
    </citation>
    <scope>NUCLEOTIDE SEQUENCE [LARGE SCALE GENOMIC DNA]</scope>
    <source>
        <strain>ATCC 8585 / CBS 2359 / DSM 70799 / NBRC 1267 / NRRL Y-1140 / WM37</strain>
    </source>
</reference>
<accession>Q6CWX1</accession>
<comment type="function">
    <text evidence="1">RNA-binding component of the eukaryotic translation initiation factor 3 (eIF-3) complex, which is involved in protein synthesis of a specialized repertoire of mRNAs and, together with other initiation factors, stimulates binding of mRNA and methionyl-tRNAi to the 40S ribosome. The eIF-3 complex specifically targets and initiates translation of a subset of mRNAs involved in cell proliferation. This subunit can bind 18S rRNA.</text>
</comment>
<comment type="subunit">
    <text evidence="1">Component of the eukaryotic translation initiation factor 3 (eIF-3) complex.</text>
</comment>
<comment type="subcellular location">
    <subcellularLocation>
        <location evidence="1">Cytoplasm</location>
    </subcellularLocation>
</comment>
<comment type="similarity">
    <text evidence="1">Belongs to the eIF-3 subunit G family.</text>
</comment>
<proteinExistence type="inferred from homology"/>
<feature type="chain" id="PRO_0000365445" description="Eukaryotic translation initiation factor 3 subunit G">
    <location>
        <begin position="1"/>
        <end position="269"/>
    </location>
</feature>
<feature type="domain" description="RRM" evidence="1">
    <location>
        <begin position="184"/>
        <end position="263"/>
    </location>
</feature>
<feature type="region of interest" description="Disordered" evidence="2">
    <location>
        <begin position="140"/>
        <end position="181"/>
    </location>
</feature>
<feature type="compositionally biased region" description="Gly residues" evidence="2">
    <location>
        <begin position="141"/>
        <end position="154"/>
    </location>
</feature>
<feature type="modified residue" description="Phosphoserine" evidence="1">
    <location>
        <position position="161"/>
    </location>
</feature>